<comment type="function">
    <text evidence="2">Involved in base excision repair of DNA damaged by oxidation or by mutagenic agents. Acts as a DNA glycosylase that recognizes and removes damaged bases. Has a preference for oxidized purines, such as 7,8-dihydro-8-oxoguanine (8-oxoG). Has AP (apurinic/apyrimidinic) lyase activity and introduces nicks in the DNA strand. Cleaves the DNA backbone by beta-delta elimination to generate a single-strand break at the site of the removed base with both 3'- and 5'-phosphates.</text>
</comment>
<comment type="catalytic activity">
    <reaction evidence="2">
        <text>Hydrolysis of DNA containing ring-opened 7-methylguanine residues, releasing 2,6-diamino-4-hydroxy-5-(N-methyl)formamidopyrimidine.</text>
        <dbReference type="EC" id="3.2.2.23"/>
    </reaction>
</comment>
<comment type="catalytic activity">
    <reaction evidence="2">
        <text>2'-deoxyribonucleotide-(2'-deoxyribose 5'-phosphate)-2'-deoxyribonucleotide-DNA = a 3'-end 2'-deoxyribonucleotide-(2,3-dehydro-2,3-deoxyribose 5'-phosphate)-DNA + a 5'-end 5'-phospho-2'-deoxyribonucleoside-DNA + H(+)</text>
        <dbReference type="Rhea" id="RHEA:66592"/>
        <dbReference type="Rhea" id="RHEA-COMP:13180"/>
        <dbReference type="Rhea" id="RHEA-COMP:16897"/>
        <dbReference type="Rhea" id="RHEA-COMP:17067"/>
        <dbReference type="ChEBI" id="CHEBI:15378"/>
        <dbReference type="ChEBI" id="CHEBI:136412"/>
        <dbReference type="ChEBI" id="CHEBI:157695"/>
        <dbReference type="ChEBI" id="CHEBI:167181"/>
        <dbReference type="EC" id="4.2.99.18"/>
    </reaction>
</comment>
<comment type="cofactor">
    <cofactor evidence="2">
        <name>Zn(2+)</name>
        <dbReference type="ChEBI" id="CHEBI:29105"/>
    </cofactor>
    <text evidence="2">Binds 1 zinc ion per subunit.</text>
</comment>
<comment type="subunit">
    <text evidence="2">Monomer.</text>
</comment>
<comment type="similarity">
    <text evidence="2">Belongs to the FPG family.</text>
</comment>
<organism>
    <name type="scientific">Lactobacillus acidophilus (strain ATCC 700396 / NCK56 / N2 / NCFM)</name>
    <dbReference type="NCBI Taxonomy" id="272621"/>
    <lineage>
        <taxon>Bacteria</taxon>
        <taxon>Bacillati</taxon>
        <taxon>Bacillota</taxon>
        <taxon>Bacilli</taxon>
        <taxon>Lactobacillales</taxon>
        <taxon>Lactobacillaceae</taxon>
        <taxon>Lactobacillus</taxon>
    </lineage>
</organism>
<name>FPG_LACAC</name>
<accession>Q5FIV8</accession>
<proteinExistence type="inferred from homology"/>
<evidence type="ECO:0000250" key="1"/>
<evidence type="ECO:0000255" key="2">
    <source>
        <dbReference type="HAMAP-Rule" id="MF_00103"/>
    </source>
</evidence>
<keyword id="KW-0227">DNA damage</keyword>
<keyword id="KW-0234">DNA repair</keyword>
<keyword id="KW-0238">DNA-binding</keyword>
<keyword id="KW-0326">Glycosidase</keyword>
<keyword id="KW-0378">Hydrolase</keyword>
<keyword id="KW-0456">Lyase</keyword>
<keyword id="KW-0479">Metal-binding</keyword>
<keyword id="KW-0511">Multifunctional enzyme</keyword>
<keyword id="KW-1185">Reference proteome</keyword>
<keyword id="KW-0862">Zinc</keyword>
<keyword id="KW-0863">Zinc-finger</keyword>
<feature type="initiator methionine" description="Removed" evidence="1">
    <location>
        <position position="1"/>
    </location>
</feature>
<feature type="chain" id="PRO_0000228440" description="Formamidopyrimidine-DNA glycosylase">
    <location>
        <begin position="2"/>
        <end position="276"/>
    </location>
</feature>
<feature type="zinc finger region" description="FPG-type" evidence="2">
    <location>
        <begin position="239"/>
        <end position="273"/>
    </location>
</feature>
<feature type="active site" description="Schiff-base intermediate with DNA" evidence="2">
    <location>
        <position position="2"/>
    </location>
</feature>
<feature type="active site" description="Proton donor" evidence="2">
    <location>
        <position position="3"/>
    </location>
</feature>
<feature type="active site" description="Proton donor; for beta-elimination activity" evidence="2">
    <location>
        <position position="58"/>
    </location>
</feature>
<feature type="active site" description="Proton donor; for delta-elimination activity" evidence="2">
    <location>
        <position position="263"/>
    </location>
</feature>
<feature type="binding site" evidence="2">
    <location>
        <position position="92"/>
    </location>
    <ligand>
        <name>DNA</name>
        <dbReference type="ChEBI" id="CHEBI:16991"/>
    </ligand>
</feature>
<feature type="binding site" evidence="2">
    <location>
        <position position="111"/>
    </location>
    <ligand>
        <name>DNA</name>
        <dbReference type="ChEBI" id="CHEBI:16991"/>
    </ligand>
</feature>
<feature type="binding site" evidence="2">
    <location>
        <position position="154"/>
    </location>
    <ligand>
        <name>DNA</name>
        <dbReference type="ChEBI" id="CHEBI:16991"/>
    </ligand>
</feature>
<dbReference type="EC" id="3.2.2.23" evidence="2"/>
<dbReference type="EC" id="4.2.99.18" evidence="2"/>
<dbReference type="EMBL" id="CP000033">
    <property type="protein sequence ID" value="AAV43366.1"/>
    <property type="molecule type" value="Genomic_DNA"/>
</dbReference>
<dbReference type="RefSeq" id="WP_003548349.1">
    <property type="nucleotide sequence ID" value="NC_006814.3"/>
</dbReference>
<dbReference type="RefSeq" id="YP_194397.1">
    <property type="nucleotide sequence ID" value="NC_006814.3"/>
</dbReference>
<dbReference type="SMR" id="Q5FIV8"/>
<dbReference type="STRING" id="272621.LBA1549"/>
<dbReference type="GeneID" id="93289385"/>
<dbReference type="KEGG" id="lac:LBA1549"/>
<dbReference type="PATRIC" id="fig|272621.13.peg.1471"/>
<dbReference type="eggNOG" id="COG0266">
    <property type="taxonomic scope" value="Bacteria"/>
</dbReference>
<dbReference type="HOGENOM" id="CLU_038423_1_2_9"/>
<dbReference type="OrthoDB" id="9800855at2"/>
<dbReference type="BioCyc" id="LACI272621:G1G49-1514-MONOMER"/>
<dbReference type="Proteomes" id="UP000006381">
    <property type="component" value="Chromosome"/>
</dbReference>
<dbReference type="GO" id="GO:0034039">
    <property type="term" value="F:8-oxo-7,8-dihydroguanine DNA N-glycosylase activity"/>
    <property type="evidence" value="ECO:0007669"/>
    <property type="project" value="TreeGrafter"/>
</dbReference>
<dbReference type="GO" id="GO:0140078">
    <property type="term" value="F:class I DNA-(apurinic or apyrimidinic site) endonuclease activity"/>
    <property type="evidence" value="ECO:0007669"/>
    <property type="project" value="UniProtKB-EC"/>
</dbReference>
<dbReference type="GO" id="GO:0003684">
    <property type="term" value="F:damaged DNA binding"/>
    <property type="evidence" value="ECO:0007669"/>
    <property type="project" value="InterPro"/>
</dbReference>
<dbReference type="GO" id="GO:0008270">
    <property type="term" value="F:zinc ion binding"/>
    <property type="evidence" value="ECO:0007669"/>
    <property type="project" value="UniProtKB-UniRule"/>
</dbReference>
<dbReference type="GO" id="GO:0006284">
    <property type="term" value="P:base-excision repair"/>
    <property type="evidence" value="ECO:0007669"/>
    <property type="project" value="InterPro"/>
</dbReference>
<dbReference type="CDD" id="cd08966">
    <property type="entry name" value="EcFpg-like_N"/>
    <property type="match status" value="1"/>
</dbReference>
<dbReference type="FunFam" id="1.10.8.50:FF:000003">
    <property type="entry name" value="Formamidopyrimidine-DNA glycosylase"/>
    <property type="match status" value="1"/>
</dbReference>
<dbReference type="FunFam" id="3.20.190.10:FF:000001">
    <property type="entry name" value="Formamidopyrimidine-DNA glycosylase"/>
    <property type="match status" value="1"/>
</dbReference>
<dbReference type="Gene3D" id="1.10.8.50">
    <property type="match status" value="1"/>
</dbReference>
<dbReference type="Gene3D" id="3.20.190.10">
    <property type="entry name" value="MutM-like, N-terminal"/>
    <property type="match status" value="1"/>
</dbReference>
<dbReference type="HAMAP" id="MF_00103">
    <property type="entry name" value="Fapy_DNA_glycosyl"/>
    <property type="match status" value="1"/>
</dbReference>
<dbReference type="InterPro" id="IPR015886">
    <property type="entry name" value="DNA_glyclase/AP_lyase_DNA-bd"/>
</dbReference>
<dbReference type="InterPro" id="IPR015887">
    <property type="entry name" value="DNA_glyclase_Znf_dom_DNA_BS"/>
</dbReference>
<dbReference type="InterPro" id="IPR020629">
    <property type="entry name" value="Formamido-pyr_DNA_Glyclase"/>
</dbReference>
<dbReference type="InterPro" id="IPR012319">
    <property type="entry name" value="FPG_cat"/>
</dbReference>
<dbReference type="InterPro" id="IPR035937">
    <property type="entry name" value="MutM-like_N-ter"/>
</dbReference>
<dbReference type="InterPro" id="IPR010979">
    <property type="entry name" value="Ribosomal_uS13-like_H2TH"/>
</dbReference>
<dbReference type="InterPro" id="IPR000214">
    <property type="entry name" value="Znf_DNA_glyclase/AP_lyase"/>
</dbReference>
<dbReference type="InterPro" id="IPR010663">
    <property type="entry name" value="Znf_FPG/IleRS"/>
</dbReference>
<dbReference type="NCBIfam" id="TIGR00577">
    <property type="entry name" value="fpg"/>
    <property type="match status" value="1"/>
</dbReference>
<dbReference type="NCBIfam" id="NF002211">
    <property type="entry name" value="PRK01103.1"/>
    <property type="match status" value="1"/>
</dbReference>
<dbReference type="PANTHER" id="PTHR22993">
    <property type="entry name" value="FORMAMIDOPYRIMIDINE-DNA GLYCOSYLASE"/>
    <property type="match status" value="1"/>
</dbReference>
<dbReference type="PANTHER" id="PTHR22993:SF9">
    <property type="entry name" value="FORMAMIDOPYRIMIDINE-DNA GLYCOSYLASE"/>
    <property type="match status" value="1"/>
</dbReference>
<dbReference type="Pfam" id="PF01149">
    <property type="entry name" value="Fapy_DNA_glyco"/>
    <property type="match status" value="1"/>
</dbReference>
<dbReference type="Pfam" id="PF06831">
    <property type="entry name" value="H2TH"/>
    <property type="match status" value="1"/>
</dbReference>
<dbReference type="Pfam" id="PF06827">
    <property type="entry name" value="zf-FPG_IleRS"/>
    <property type="match status" value="1"/>
</dbReference>
<dbReference type="SMART" id="SM00898">
    <property type="entry name" value="Fapy_DNA_glyco"/>
    <property type="match status" value="1"/>
</dbReference>
<dbReference type="SMART" id="SM01232">
    <property type="entry name" value="H2TH"/>
    <property type="match status" value="1"/>
</dbReference>
<dbReference type="SUPFAM" id="SSF57716">
    <property type="entry name" value="Glucocorticoid receptor-like (DNA-binding domain)"/>
    <property type="match status" value="1"/>
</dbReference>
<dbReference type="SUPFAM" id="SSF81624">
    <property type="entry name" value="N-terminal domain of MutM-like DNA repair proteins"/>
    <property type="match status" value="1"/>
</dbReference>
<dbReference type="SUPFAM" id="SSF46946">
    <property type="entry name" value="S13-like H2TH domain"/>
    <property type="match status" value="1"/>
</dbReference>
<dbReference type="PROSITE" id="PS51068">
    <property type="entry name" value="FPG_CAT"/>
    <property type="match status" value="1"/>
</dbReference>
<dbReference type="PROSITE" id="PS01242">
    <property type="entry name" value="ZF_FPG_1"/>
    <property type="match status" value="1"/>
</dbReference>
<dbReference type="PROSITE" id="PS51066">
    <property type="entry name" value="ZF_FPG_2"/>
    <property type="match status" value="1"/>
</dbReference>
<sequence>MPEMPEVETVRRTLLPLIKGKTIEKVVLWYPTIVATDHDEFLKELPGKKIIGIDRYAKYLLIRLSDNLTIVSHLRMEGKYHLTTEDAPKDKHDHVEFVFTDKTALRYNDVRKFGRMQLIITGTERQVTGIKKLGPEPNTSEFSQQYLIDNLKKKHKNIKNVLLDQTTVAGLGNIYVDETLWQSKIHPLSIANKIPAKKVAGLWENINQTIALAIEKRGTTVHSYLDANGEVGGYQEMLQVYGHVGEECPRCGNIFEKIKVSGRGTTFCPHCQVIYK</sequence>
<protein>
    <recommendedName>
        <fullName evidence="2">Formamidopyrimidine-DNA glycosylase</fullName>
        <shortName evidence="2">Fapy-DNA glycosylase</shortName>
        <ecNumber evidence="2">3.2.2.23</ecNumber>
    </recommendedName>
    <alternativeName>
        <fullName evidence="2">DNA-(apurinic or apyrimidinic site) lyase MutM</fullName>
        <shortName evidence="2">AP lyase MutM</shortName>
        <ecNumber evidence="2">4.2.99.18</ecNumber>
    </alternativeName>
</protein>
<reference key="1">
    <citation type="journal article" date="2005" name="Proc. Natl. Acad. Sci. U.S.A.">
        <title>Complete genome sequence of the probiotic lactic acid bacterium Lactobacillus acidophilus NCFM.</title>
        <authorList>
            <person name="Altermann E."/>
            <person name="Russell W.M."/>
            <person name="Azcarate-Peril M.A."/>
            <person name="Barrangou R."/>
            <person name="Buck B.L."/>
            <person name="McAuliffe O."/>
            <person name="Souther N."/>
            <person name="Dobson A."/>
            <person name="Duong T."/>
            <person name="Callanan M."/>
            <person name="Lick S."/>
            <person name="Hamrick A."/>
            <person name="Cano R."/>
            <person name="Klaenhammer T.R."/>
        </authorList>
    </citation>
    <scope>NUCLEOTIDE SEQUENCE [LARGE SCALE GENOMIC DNA]</scope>
    <source>
        <strain>ATCC 700396 / NCK56 / N2 / NCFM</strain>
    </source>
</reference>
<gene>
    <name evidence="2" type="primary">mutM</name>
    <name evidence="2" type="synonym">fpg</name>
    <name type="ordered locus">LBA1549</name>
</gene>